<sequence length="292" mass="32333">MNHLLDERKRRLSQFHEIIKKRPIETRPVDIPDGVFSQCEQCNSAIYNKDLEHNYEVCPYCSYHFKINAVKRLKYTLDEDTFKPLFENITSKNPLGMPEYEEKLDKGMRMAKMNEAFLAGTGKIDGQNLAIGVLDSYFMMGSMGSVVGERITRLIEHAAKHNLPLVIFSASGGARMQEGILSLMQMAKTSGALNLLDEKGLVYISVMTNPTTGGVAASFASLGDINIAEKSSLIGFAGARVIKQTIGQDLPAGFQTDAFQLQKGQVDLVVLRSQLKKTLSTLLKLHAKKVTS</sequence>
<proteinExistence type="inferred from homology"/>
<keyword id="KW-0067">ATP-binding</keyword>
<keyword id="KW-0963">Cytoplasm</keyword>
<keyword id="KW-0275">Fatty acid biosynthesis</keyword>
<keyword id="KW-0276">Fatty acid metabolism</keyword>
<keyword id="KW-0444">Lipid biosynthesis</keyword>
<keyword id="KW-0443">Lipid metabolism</keyword>
<keyword id="KW-0479">Metal-binding</keyword>
<keyword id="KW-0547">Nucleotide-binding</keyword>
<keyword id="KW-1185">Reference proteome</keyword>
<keyword id="KW-0808">Transferase</keyword>
<keyword id="KW-0862">Zinc</keyword>
<keyword id="KW-0863">Zinc-finger</keyword>
<protein>
    <recommendedName>
        <fullName evidence="1">Acetyl-coenzyme A carboxylase carboxyl transferase subunit beta</fullName>
        <shortName evidence="1">ACCase subunit beta</shortName>
        <shortName evidence="1">Acetyl-CoA carboxylase carboxyltransferase subunit beta</shortName>
        <ecNumber evidence="1">2.1.3.15</ecNumber>
    </recommendedName>
</protein>
<name>ACCD_ACHLI</name>
<accession>A9NFE8</accession>
<reference key="1">
    <citation type="journal article" date="2011" name="J. Bacteriol.">
        <title>Complete genome and proteome of Acholeplasma laidlawii.</title>
        <authorList>
            <person name="Lazarev V.N."/>
            <person name="Levitskii S.A."/>
            <person name="Basovskii Y.I."/>
            <person name="Chukin M.M."/>
            <person name="Akopian T.A."/>
            <person name="Vereshchagin V.V."/>
            <person name="Kostrjukova E.S."/>
            <person name="Kovaleva G.Y."/>
            <person name="Kazanov M.D."/>
            <person name="Malko D.B."/>
            <person name="Vitreschak A.G."/>
            <person name="Sernova N.V."/>
            <person name="Gelfand M.S."/>
            <person name="Demina I.A."/>
            <person name="Serebryakova M.V."/>
            <person name="Galyamina M.A."/>
            <person name="Vtyurin N.N."/>
            <person name="Rogov S.I."/>
            <person name="Alexeev D.G."/>
            <person name="Ladygina V.G."/>
            <person name="Govorun V.M."/>
        </authorList>
    </citation>
    <scope>NUCLEOTIDE SEQUENCE [LARGE SCALE GENOMIC DNA]</scope>
    <source>
        <strain>PG-8A</strain>
    </source>
</reference>
<dbReference type="EC" id="2.1.3.15" evidence="1"/>
<dbReference type="EMBL" id="CP000896">
    <property type="protein sequence ID" value="ABX81078.1"/>
    <property type="molecule type" value="Genomic_DNA"/>
</dbReference>
<dbReference type="RefSeq" id="WP_012242409.1">
    <property type="nucleotide sequence ID" value="NC_010163.1"/>
</dbReference>
<dbReference type="SMR" id="A9NFE8"/>
<dbReference type="STRING" id="441768.ACL_0459"/>
<dbReference type="GeneID" id="41338639"/>
<dbReference type="KEGG" id="acl:ACL_0459"/>
<dbReference type="eggNOG" id="COG0777">
    <property type="taxonomic scope" value="Bacteria"/>
</dbReference>
<dbReference type="HOGENOM" id="CLU_015486_1_1_14"/>
<dbReference type="OrthoDB" id="9772975at2"/>
<dbReference type="UniPathway" id="UPA00655">
    <property type="reaction ID" value="UER00711"/>
</dbReference>
<dbReference type="Proteomes" id="UP000008558">
    <property type="component" value="Chromosome"/>
</dbReference>
<dbReference type="GO" id="GO:0009317">
    <property type="term" value="C:acetyl-CoA carboxylase complex"/>
    <property type="evidence" value="ECO:0007669"/>
    <property type="project" value="InterPro"/>
</dbReference>
<dbReference type="GO" id="GO:0003989">
    <property type="term" value="F:acetyl-CoA carboxylase activity"/>
    <property type="evidence" value="ECO:0007669"/>
    <property type="project" value="InterPro"/>
</dbReference>
<dbReference type="GO" id="GO:0005524">
    <property type="term" value="F:ATP binding"/>
    <property type="evidence" value="ECO:0007669"/>
    <property type="project" value="UniProtKB-KW"/>
</dbReference>
<dbReference type="GO" id="GO:0016743">
    <property type="term" value="F:carboxyl- or carbamoyltransferase activity"/>
    <property type="evidence" value="ECO:0007669"/>
    <property type="project" value="UniProtKB-UniRule"/>
</dbReference>
<dbReference type="GO" id="GO:0008270">
    <property type="term" value="F:zinc ion binding"/>
    <property type="evidence" value="ECO:0007669"/>
    <property type="project" value="UniProtKB-UniRule"/>
</dbReference>
<dbReference type="GO" id="GO:0006633">
    <property type="term" value="P:fatty acid biosynthetic process"/>
    <property type="evidence" value="ECO:0007669"/>
    <property type="project" value="UniProtKB-KW"/>
</dbReference>
<dbReference type="GO" id="GO:2001295">
    <property type="term" value="P:malonyl-CoA biosynthetic process"/>
    <property type="evidence" value="ECO:0007669"/>
    <property type="project" value="UniProtKB-UniRule"/>
</dbReference>
<dbReference type="Gene3D" id="3.90.226.10">
    <property type="entry name" value="2-enoyl-CoA Hydratase, Chain A, domain 1"/>
    <property type="match status" value="1"/>
</dbReference>
<dbReference type="HAMAP" id="MF_01395">
    <property type="entry name" value="AcetylCoA_CT_beta"/>
    <property type="match status" value="1"/>
</dbReference>
<dbReference type="InterPro" id="IPR034733">
    <property type="entry name" value="AcCoA_carboxyl_beta"/>
</dbReference>
<dbReference type="InterPro" id="IPR000438">
    <property type="entry name" value="Acetyl_CoA_COase_Trfase_b_su"/>
</dbReference>
<dbReference type="InterPro" id="IPR029045">
    <property type="entry name" value="ClpP/crotonase-like_dom_sf"/>
</dbReference>
<dbReference type="InterPro" id="IPR011762">
    <property type="entry name" value="COA_CT_N"/>
</dbReference>
<dbReference type="InterPro" id="IPR041010">
    <property type="entry name" value="Znf-ACC"/>
</dbReference>
<dbReference type="NCBIfam" id="TIGR00515">
    <property type="entry name" value="accD"/>
    <property type="match status" value="1"/>
</dbReference>
<dbReference type="PANTHER" id="PTHR42995">
    <property type="entry name" value="ACETYL-COENZYME A CARBOXYLASE CARBOXYL TRANSFERASE SUBUNIT BETA, CHLOROPLASTIC"/>
    <property type="match status" value="1"/>
</dbReference>
<dbReference type="PANTHER" id="PTHR42995:SF5">
    <property type="entry name" value="ACETYL-COENZYME A CARBOXYLASE CARBOXYL TRANSFERASE SUBUNIT BETA, CHLOROPLASTIC"/>
    <property type="match status" value="1"/>
</dbReference>
<dbReference type="Pfam" id="PF01039">
    <property type="entry name" value="Carboxyl_trans"/>
    <property type="match status" value="1"/>
</dbReference>
<dbReference type="Pfam" id="PF17848">
    <property type="entry name" value="Zn_ribbon_ACC"/>
    <property type="match status" value="1"/>
</dbReference>
<dbReference type="PRINTS" id="PR01070">
    <property type="entry name" value="ACCCTRFRASEB"/>
</dbReference>
<dbReference type="SUPFAM" id="SSF52096">
    <property type="entry name" value="ClpP/crotonase"/>
    <property type="match status" value="1"/>
</dbReference>
<dbReference type="PROSITE" id="PS50980">
    <property type="entry name" value="COA_CT_NTER"/>
    <property type="match status" value="1"/>
</dbReference>
<gene>
    <name evidence="1" type="primary">accD</name>
    <name type="ordered locus">ACL_0459</name>
</gene>
<comment type="function">
    <text evidence="1">Component of the acetyl coenzyme A carboxylase (ACC) complex. Biotin carboxylase (BC) catalyzes the carboxylation of biotin on its carrier protein (BCCP) and then the CO(2) group is transferred by the transcarboxylase to acetyl-CoA to form malonyl-CoA.</text>
</comment>
<comment type="catalytic activity">
    <reaction evidence="1">
        <text>N(6)-carboxybiotinyl-L-lysyl-[protein] + acetyl-CoA = N(6)-biotinyl-L-lysyl-[protein] + malonyl-CoA</text>
        <dbReference type="Rhea" id="RHEA:54728"/>
        <dbReference type="Rhea" id="RHEA-COMP:10505"/>
        <dbReference type="Rhea" id="RHEA-COMP:10506"/>
        <dbReference type="ChEBI" id="CHEBI:57288"/>
        <dbReference type="ChEBI" id="CHEBI:57384"/>
        <dbReference type="ChEBI" id="CHEBI:83144"/>
        <dbReference type="ChEBI" id="CHEBI:83145"/>
        <dbReference type="EC" id="2.1.3.15"/>
    </reaction>
</comment>
<comment type="cofactor">
    <cofactor evidence="1">
        <name>Zn(2+)</name>
        <dbReference type="ChEBI" id="CHEBI:29105"/>
    </cofactor>
    <text evidence="1">Binds 1 zinc ion per subunit.</text>
</comment>
<comment type="pathway">
    <text evidence="1">Lipid metabolism; malonyl-CoA biosynthesis; malonyl-CoA from acetyl-CoA: step 1/1.</text>
</comment>
<comment type="subunit">
    <text evidence="1">Acetyl-CoA carboxylase is a heterohexamer composed of biotin carboxyl carrier protein (AccB), biotin carboxylase (AccC) and two subunits each of ACCase subunit alpha (AccA) and ACCase subunit beta (AccD).</text>
</comment>
<comment type="subcellular location">
    <subcellularLocation>
        <location evidence="1">Cytoplasm</location>
    </subcellularLocation>
</comment>
<comment type="similarity">
    <text evidence="1">Belongs to the AccD/PCCB family.</text>
</comment>
<organism>
    <name type="scientific">Acholeplasma laidlawii (strain PG-8A)</name>
    <dbReference type="NCBI Taxonomy" id="441768"/>
    <lineage>
        <taxon>Bacteria</taxon>
        <taxon>Bacillati</taxon>
        <taxon>Mycoplasmatota</taxon>
        <taxon>Mollicutes</taxon>
        <taxon>Acholeplasmatales</taxon>
        <taxon>Acholeplasmataceae</taxon>
        <taxon>Acholeplasma</taxon>
    </lineage>
</organism>
<evidence type="ECO:0000255" key="1">
    <source>
        <dbReference type="HAMAP-Rule" id="MF_01395"/>
    </source>
</evidence>
<evidence type="ECO:0000255" key="2">
    <source>
        <dbReference type="PROSITE-ProRule" id="PRU01136"/>
    </source>
</evidence>
<feature type="chain" id="PRO_0000389653" description="Acetyl-coenzyme A carboxylase carboxyl transferase subunit beta">
    <location>
        <begin position="1"/>
        <end position="292"/>
    </location>
</feature>
<feature type="domain" description="CoA carboxyltransferase N-terminal" evidence="2">
    <location>
        <begin position="35"/>
        <end position="292"/>
    </location>
</feature>
<feature type="zinc finger region" description="C4-type" evidence="1">
    <location>
        <begin position="39"/>
        <end position="61"/>
    </location>
</feature>
<feature type="binding site" evidence="1">
    <location>
        <position position="39"/>
    </location>
    <ligand>
        <name>Zn(2+)</name>
        <dbReference type="ChEBI" id="CHEBI:29105"/>
    </ligand>
</feature>
<feature type="binding site" evidence="1">
    <location>
        <position position="42"/>
    </location>
    <ligand>
        <name>Zn(2+)</name>
        <dbReference type="ChEBI" id="CHEBI:29105"/>
    </ligand>
</feature>
<feature type="binding site" evidence="1">
    <location>
        <position position="58"/>
    </location>
    <ligand>
        <name>Zn(2+)</name>
        <dbReference type="ChEBI" id="CHEBI:29105"/>
    </ligand>
</feature>
<feature type="binding site" evidence="1">
    <location>
        <position position="61"/>
    </location>
    <ligand>
        <name>Zn(2+)</name>
        <dbReference type="ChEBI" id="CHEBI:29105"/>
    </ligand>
</feature>